<keyword id="KW-0002">3D-structure</keyword>
<keyword id="KW-0130">Cell adhesion</keyword>
<keyword id="KW-0965">Cell junction</keyword>
<keyword id="KW-1003">Cell membrane</keyword>
<keyword id="KW-0966">Cell projection</keyword>
<keyword id="KW-0963">Cytoplasm</keyword>
<keyword id="KW-0206">Cytoskeleton</keyword>
<keyword id="KW-0472">Membrane</keyword>
<keyword id="KW-0597">Phosphoprotein</keyword>
<keyword id="KW-1185">Reference proteome</keyword>
<evidence type="ECO:0000250" key="1"/>
<evidence type="ECO:0000250" key="2">
    <source>
        <dbReference type="UniProtKB" id="Q9BQL6"/>
    </source>
</evidence>
<evidence type="ECO:0000255" key="3">
    <source>
        <dbReference type="PROSITE-ProRule" id="PRU00145"/>
    </source>
</evidence>
<evidence type="ECO:0000256" key="4">
    <source>
        <dbReference type="SAM" id="MobiDB-lite"/>
    </source>
</evidence>
<evidence type="ECO:0000269" key="5">
    <source>
    </source>
</evidence>
<evidence type="ECO:0000305" key="6"/>
<evidence type="ECO:0007829" key="7">
    <source>
        <dbReference type="PDB" id="2KMC"/>
    </source>
</evidence>
<evidence type="ECO:0007829" key="8">
    <source>
        <dbReference type="PDB" id="4BBK"/>
    </source>
</evidence>
<reference key="1">
    <citation type="journal article" date="2009" name="PLoS Biol.">
        <title>Lineage-specific biology revealed by a finished genome assembly of the mouse.</title>
        <authorList>
            <person name="Church D.M."/>
            <person name="Goodstadt L."/>
            <person name="Hillier L.W."/>
            <person name="Zody M.C."/>
            <person name="Goldstein S."/>
            <person name="She X."/>
            <person name="Bult C.J."/>
            <person name="Agarwala R."/>
            <person name="Cherry J.L."/>
            <person name="DiCuccio M."/>
            <person name="Hlavina W."/>
            <person name="Kapustin Y."/>
            <person name="Meric P."/>
            <person name="Maglott D."/>
            <person name="Birtle Z."/>
            <person name="Marques A.C."/>
            <person name="Graves T."/>
            <person name="Zhou S."/>
            <person name="Teague B."/>
            <person name="Potamousis K."/>
            <person name="Churas C."/>
            <person name="Place M."/>
            <person name="Herschleb J."/>
            <person name="Runnheim R."/>
            <person name="Forrest D."/>
            <person name="Amos-Landgraf J."/>
            <person name="Schwartz D.C."/>
            <person name="Cheng Z."/>
            <person name="Lindblad-Toh K."/>
            <person name="Eichler E.E."/>
            <person name="Ponting C.P."/>
        </authorList>
    </citation>
    <scope>NUCLEOTIDE SEQUENCE [LARGE SCALE GENOMIC DNA]</scope>
    <source>
        <strain>C57BL/6J</strain>
    </source>
</reference>
<reference key="2">
    <citation type="journal article" date="2004" name="Genome Res.">
        <title>The status, quality, and expansion of the NIH full-length cDNA project: the Mammalian Gene Collection (MGC).</title>
        <authorList>
            <consortium name="The MGC Project Team"/>
        </authorList>
    </citation>
    <scope>NUCLEOTIDE SEQUENCE [LARGE SCALE MRNA] OF 1-152 AND 448-677</scope>
    <source>
        <tissue>Mammary fibroblast</tissue>
    </source>
</reference>
<reference key="3">
    <citation type="journal article" date="2005" name="Science">
        <title>The transcriptional landscape of the mammalian genome.</title>
        <authorList>
            <person name="Carninci P."/>
            <person name="Kasukawa T."/>
            <person name="Katayama S."/>
            <person name="Gough J."/>
            <person name="Frith M.C."/>
            <person name="Maeda N."/>
            <person name="Oyama R."/>
            <person name="Ravasi T."/>
            <person name="Lenhard B."/>
            <person name="Wells C."/>
            <person name="Kodzius R."/>
            <person name="Shimokawa K."/>
            <person name="Bajic V.B."/>
            <person name="Brenner S.E."/>
            <person name="Batalov S."/>
            <person name="Forrest A.R."/>
            <person name="Zavolan M."/>
            <person name="Davis M.J."/>
            <person name="Wilming L.G."/>
            <person name="Aidinis V."/>
            <person name="Allen J.E."/>
            <person name="Ambesi-Impiombato A."/>
            <person name="Apweiler R."/>
            <person name="Aturaliya R.N."/>
            <person name="Bailey T.L."/>
            <person name="Bansal M."/>
            <person name="Baxter L."/>
            <person name="Beisel K.W."/>
            <person name="Bersano T."/>
            <person name="Bono H."/>
            <person name="Chalk A.M."/>
            <person name="Chiu K.P."/>
            <person name="Choudhary V."/>
            <person name="Christoffels A."/>
            <person name="Clutterbuck D.R."/>
            <person name="Crowe M.L."/>
            <person name="Dalla E."/>
            <person name="Dalrymple B.P."/>
            <person name="de Bono B."/>
            <person name="Della Gatta G."/>
            <person name="di Bernardo D."/>
            <person name="Down T."/>
            <person name="Engstrom P."/>
            <person name="Fagiolini M."/>
            <person name="Faulkner G."/>
            <person name="Fletcher C.F."/>
            <person name="Fukushima T."/>
            <person name="Furuno M."/>
            <person name="Futaki S."/>
            <person name="Gariboldi M."/>
            <person name="Georgii-Hemming P."/>
            <person name="Gingeras T.R."/>
            <person name="Gojobori T."/>
            <person name="Green R.E."/>
            <person name="Gustincich S."/>
            <person name="Harbers M."/>
            <person name="Hayashi Y."/>
            <person name="Hensch T.K."/>
            <person name="Hirokawa N."/>
            <person name="Hill D."/>
            <person name="Huminiecki L."/>
            <person name="Iacono M."/>
            <person name="Ikeo K."/>
            <person name="Iwama A."/>
            <person name="Ishikawa T."/>
            <person name="Jakt M."/>
            <person name="Kanapin A."/>
            <person name="Katoh M."/>
            <person name="Kawasawa Y."/>
            <person name="Kelso J."/>
            <person name="Kitamura H."/>
            <person name="Kitano H."/>
            <person name="Kollias G."/>
            <person name="Krishnan S.P."/>
            <person name="Kruger A."/>
            <person name="Kummerfeld S.K."/>
            <person name="Kurochkin I.V."/>
            <person name="Lareau L.F."/>
            <person name="Lazarevic D."/>
            <person name="Lipovich L."/>
            <person name="Liu J."/>
            <person name="Liuni S."/>
            <person name="McWilliam S."/>
            <person name="Madan Babu M."/>
            <person name="Madera M."/>
            <person name="Marchionni L."/>
            <person name="Matsuda H."/>
            <person name="Matsuzawa S."/>
            <person name="Miki H."/>
            <person name="Mignone F."/>
            <person name="Miyake S."/>
            <person name="Morris K."/>
            <person name="Mottagui-Tabar S."/>
            <person name="Mulder N."/>
            <person name="Nakano N."/>
            <person name="Nakauchi H."/>
            <person name="Ng P."/>
            <person name="Nilsson R."/>
            <person name="Nishiguchi S."/>
            <person name="Nishikawa S."/>
            <person name="Nori F."/>
            <person name="Ohara O."/>
            <person name="Okazaki Y."/>
            <person name="Orlando V."/>
            <person name="Pang K.C."/>
            <person name="Pavan W.J."/>
            <person name="Pavesi G."/>
            <person name="Pesole G."/>
            <person name="Petrovsky N."/>
            <person name="Piazza S."/>
            <person name="Reed J."/>
            <person name="Reid J.F."/>
            <person name="Ring B.Z."/>
            <person name="Ringwald M."/>
            <person name="Rost B."/>
            <person name="Ruan Y."/>
            <person name="Salzberg S.L."/>
            <person name="Sandelin A."/>
            <person name="Schneider C."/>
            <person name="Schoenbach C."/>
            <person name="Sekiguchi K."/>
            <person name="Semple C.A."/>
            <person name="Seno S."/>
            <person name="Sessa L."/>
            <person name="Sheng Y."/>
            <person name="Shibata Y."/>
            <person name="Shimada H."/>
            <person name="Shimada K."/>
            <person name="Silva D."/>
            <person name="Sinclair B."/>
            <person name="Sperling S."/>
            <person name="Stupka E."/>
            <person name="Sugiura K."/>
            <person name="Sultana R."/>
            <person name="Takenaka Y."/>
            <person name="Taki K."/>
            <person name="Tammoja K."/>
            <person name="Tan S.L."/>
            <person name="Tang S."/>
            <person name="Taylor M.S."/>
            <person name="Tegner J."/>
            <person name="Teichmann S.A."/>
            <person name="Ueda H.R."/>
            <person name="van Nimwegen E."/>
            <person name="Verardo R."/>
            <person name="Wei C.L."/>
            <person name="Yagi K."/>
            <person name="Yamanishi H."/>
            <person name="Zabarovsky E."/>
            <person name="Zhu S."/>
            <person name="Zimmer A."/>
            <person name="Hide W."/>
            <person name="Bult C."/>
            <person name="Grimmond S.M."/>
            <person name="Teasdale R.D."/>
            <person name="Liu E.T."/>
            <person name="Brusic V."/>
            <person name="Quackenbush J."/>
            <person name="Wahlestedt C."/>
            <person name="Mattick J.S."/>
            <person name="Hume D.A."/>
            <person name="Kai C."/>
            <person name="Sasaki D."/>
            <person name="Tomaru Y."/>
            <person name="Fukuda S."/>
            <person name="Kanamori-Katayama M."/>
            <person name="Suzuki M."/>
            <person name="Aoki J."/>
            <person name="Arakawa T."/>
            <person name="Iida J."/>
            <person name="Imamura K."/>
            <person name="Itoh M."/>
            <person name="Kato T."/>
            <person name="Kawaji H."/>
            <person name="Kawagashira N."/>
            <person name="Kawashima T."/>
            <person name="Kojima M."/>
            <person name="Kondo S."/>
            <person name="Konno H."/>
            <person name="Nakano K."/>
            <person name="Ninomiya N."/>
            <person name="Nishio T."/>
            <person name="Okada M."/>
            <person name="Plessy C."/>
            <person name="Shibata K."/>
            <person name="Shiraki T."/>
            <person name="Suzuki S."/>
            <person name="Tagami M."/>
            <person name="Waki K."/>
            <person name="Watahiki A."/>
            <person name="Okamura-Oho Y."/>
            <person name="Suzuki H."/>
            <person name="Kawai J."/>
            <person name="Hayashizaki Y."/>
        </authorList>
    </citation>
    <scope>NUCLEOTIDE SEQUENCE [LARGE SCALE MRNA] OF 41-677</scope>
    <source>
        <strain>C57BL/6J</strain>
    </source>
</reference>
<reference key="4">
    <citation type="journal article" date="2008" name="PLoS Genet.">
        <title>Loss of Kindlin-1 causes skin atrophy and lethal neonatal intestinal epithelial dysfunction.</title>
        <authorList>
            <person name="Ussar S."/>
            <person name="Moser M."/>
            <person name="Widmaier M."/>
            <person name="Rognoni E."/>
            <person name="Harrer C."/>
            <person name="Genzel-Boroviczeny O."/>
            <person name="Fassler R."/>
        </authorList>
    </citation>
    <scope>DISRUPTION PHENOTYPE</scope>
</reference>
<reference key="5">
    <citation type="journal article" date="2009" name="J. Mol. Biol.">
        <title>The structure of the N-terminus of kindlin-1: a domain important for alphaIIbbeta3 integrin activation.</title>
        <authorList>
            <person name="Goult B.T."/>
            <person name="Bouaouina M."/>
            <person name="Harburger D.S."/>
            <person name="Bate N."/>
            <person name="Patel B."/>
            <person name="Anthis N.J."/>
            <person name="Campbell I.D."/>
            <person name="Calderwood D.A."/>
            <person name="Barsukov I.L."/>
            <person name="Roberts G.C."/>
            <person name="Critchley D.R."/>
        </authorList>
    </citation>
    <scope>STRUCTURE BY NMR OF 1-96</scope>
    <scope>DOMAIN FERM</scope>
</reference>
<protein>
    <recommendedName>
        <fullName>Fermitin family homolog 1</fullName>
    </recommendedName>
    <alternativeName>
        <fullName>Kindlin-1</fullName>
    </alternativeName>
    <alternativeName>
        <fullName>Unc-112-related protein 1</fullName>
    </alternativeName>
</protein>
<sequence length="677" mass="76941">MLSSGDLTSASWELVVRVDHANGEQQTEITLRVSGDLHIGGVMLKLVEQMNIAQDWSDYALWWEQKRCWLLKTHWTLDKCGVQADANLLFTPQHKMLRLRLPNAKTVRLRVSFSAVVFKAVADICKVLNIRRPEELSLLKPSSDYCKKKKKKEKNSKEPVIEDILNLESSSTSSGSPVSPGLYSKTMTPTYDPINGTPALSTMTWFGDSPLTEQNCSVLAFSQPPPSPDVLADMFQPRSLVDKAKMNAGWLDSSRSLMEQSIQEDEQLQLRFKYYTFFDLNPKYDAVRINQLYEQARWAVLLEEIDCTEEEMLIFAALQYHISKLSQCAEIQDFATKSEVDEVEAALSSLEVTLEGGKADNTLEDITDIPKLADYLKLFRPKKLMLKACKQYWFVFKDTSIAYFKNKELEQGEPIEKLNLRGCEIVPDVNVSGRKFGIKLLIPVADGMNEVYLRCDHEDQYARWMAACILASKGKTMADSSYQPEVISILSFLKMKNRNSSPLVASSLENMDMNPECLVSPCCAKKHKSKQLAARILEAHHNVAQMPLVEAKLQFIQAWQSLPEFGLTYYLVRFKGSKKDDILGVAYNRLIRIDAVTGIPVTTWRFANMKQWNVNWEIRQVAIEFDQNVSIAFTCLSADCKIVHEYIGGYIFLSTRSKDQNETLDEDLFHKLTGGQD</sequence>
<dbReference type="EMBL" id="AL831763">
    <property type="status" value="NOT_ANNOTATED_CDS"/>
    <property type="molecule type" value="Genomic_DNA"/>
</dbReference>
<dbReference type="EMBL" id="BC029093">
    <property type="protein sequence ID" value="AAH29093.1"/>
    <property type="status" value="ALT_INIT"/>
    <property type="molecule type" value="mRNA"/>
</dbReference>
<dbReference type="EMBL" id="BC042792">
    <property type="status" value="NOT_ANNOTATED_CDS"/>
    <property type="molecule type" value="mRNA"/>
</dbReference>
<dbReference type="EMBL" id="AK050804">
    <property type="protein sequence ID" value="BAC34417.1"/>
    <property type="molecule type" value="mRNA"/>
</dbReference>
<dbReference type="CCDS" id="CCDS38248.1"/>
<dbReference type="RefSeq" id="NP_932146.2">
    <property type="nucleotide sequence ID" value="NM_198029.2"/>
</dbReference>
<dbReference type="RefSeq" id="XP_017173695.1">
    <property type="nucleotide sequence ID" value="XM_017318206.1"/>
</dbReference>
<dbReference type="RefSeq" id="XP_017173696.1">
    <property type="nucleotide sequence ID" value="XM_017318207.1"/>
</dbReference>
<dbReference type="RefSeq" id="XP_017173699.1">
    <property type="nucleotide sequence ID" value="XM_017318210.1"/>
</dbReference>
<dbReference type="PDB" id="2KMC">
    <property type="method" value="NMR"/>
    <property type="chains" value="A=1-96"/>
</dbReference>
<dbReference type="PDB" id="4BBK">
    <property type="method" value="X-ray"/>
    <property type="resolution" value="2.10 A"/>
    <property type="chains" value="A=364-509"/>
</dbReference>
<dbReference type="PDBsum" id="2KMC"/>
<dbReference type="PDBsum" id="4BBK"/>
<dbReference type="BMRB" id="P59113"/>
<dbReference type="SMR" id="P59113"/>
<dbReference type="BioGRID" id="232339">
    <property type="interactions" value="1"/>
</dbReference>
<dbReference type="FunCoup" id="P59113">
    <property type="interactions" value="229"/>
</dbReference>
<dbReference type="STRING" id="10090.ENSMUSP00000047616"/>
<dbReference type="iPTMnet" id="P59113"/>
<dbReference type="PhosphoSitePlus" id="P59113"/>
<dbReference type="PaxDb" id="10090-ENSMUSP00000047616"/>
<dbReference type="PeptideAtlas" id="P59113"/>
<dbReference type="ProteomicsDB" id="271740"/>
<dbReference type="Antibodypedia" id="8379">
    <property type="antibodies" value="235 antibodies from 28 providers"/>
</dbReference>
<dbReference type="DNASU" id="241639"/>
<dbReference type="Ensembl" id="ENSMUST00000038280.5">
    <property type="protein sequence ID" value="ENSMUSP00000047616.5"/>
    <property type="gene ID" value="ENSMUSG00000027356.9"/>
</dbReference>
<dbReference type="GeneID" id="241639"/>
<dbReference type="KEGG" id="mmu:241639"/>
<dbReference type="UCSC" id="uc008mno.1">
    <property type="organism name" value="mouse"/>
</dbReference>
<dbReference type="AGR" id="MGI:2443583"/>
<dbReference type="CTD" id="55612"/>
<dbReference type="MGI" id="MGI:2443583">
    <property type="gene designation" value="Fermt1"/>
</dbReference>
<dbReference type="VEuPathDB" id="HostDB:ENSMUSG00000027356"/>
<dbReference type="eggNOG" id="KOG3727">
    <property type="taxonomic scope" value="Eukaryota"/>
</dbReference>
<dbReference type="GeneTree" id="ENSGT00390000013444"/>
<dbReference type="HOGENOM" id="CLU_011611_0_0_1"/>
<dbReference type="InParanoid" id="P59113"/>
<dbReference type="OMA" id="GMFFCAP"/>
<dbReference type="OrthoDB" id="10057618at2759"/>
<dbReference type="PhylomeDB" id="P59113"/>
<dbReference type="TreeFam" id="TF314677"/>
<dbReference type="BioGRID-ORCS" id="241639">
    <property type="hits" value="2 hits in 79 CRISPR screens"/>
</dbReference>
<dbReference type="EvolutionaryTrace" id="P59113"/>
<dbReference type="PRO" id="PR:P59113"/>
<dbReference type="Proteomes" id="UP000000589">
    <property type="component" value="Chromosome 2"/>
</dbReference>
<dbReference type="RNAct" id="P59113">
    <property type="molecule type" value="protein"/>
</dbReference>
<dbReference type="Bgee" id="ENSMUSG00000027356">
    <property type="expression patterns" value="Expressed in right kidney and 68 other cell types or tissues"/>
</dbReference>
<dbReference type="GO" id="GO:0030054">
    <property type="term" value="C:cell junction"/>
    <property type="evidence" value="ECO:0000250"/>
    <property type="project" value="UniProtKB"/>
</dbReference>
<dbReference type="GO" id="GO:0005856">
    <property type="term" value="C:cytoskeleton"/>
    <property type="evidence" value="ECO:0007669"/>
    <property type="project" value="UniProtKB-SubCell"/>
</dbReference>
<dbReference type="GO" id="GO:0005829">
    <property type="term" value="C:cytosol"/>
    <property type="evidence" value="ECO:0000250"/>
    <property type="project" value="UniProtKB"/>
</dbReference>
<dbReference type="GO" id="GO:0005925">
    <property type="term" value="C:focal adhesion"/>
    <property type="evidence" value="ECO:0000314"/>
    <property type="project" value="MGI"/>
</dbReference>
<dbReference type="GO" id="GO:0032587">
    <property type="term" value="C:ruffle membrane"/>
    <property type="evidence" value="ECO:0007669"/>
    <property type="project" value="UniProtKB-SubCell"/>
</dbReference>
<dbReference type="GO" id="GO:0051015">
    <property type="term" value="F:actin filament binding"/>
    <property type="evidence" value="ECO:0000314"/>
    <property type="project" value="MGI"/>
</dbReference>
<dbReference type="GO" id="GO:0071711">
    <property type="term" value="P:basement membrane organization"/>
    <property type="evidence" value="ECO:0000315"/>
    <property type="project" value="CAFA"/>
</dbReference>
<dbReference type="GO" id="GO:0007155">
    <property type="term" value="P:cell adhesion"/>
    <property type="evidence" value="ECO:0000250"/>
    <property type="project" value="UniProtKB"/>
</dbReference>
<dbReference type="GO" id="GO:0090162">
    <property type="term" value="P:establishment of epithelial cell polarity"/>
    <property type="evidence" value="ECO:0000250"/>
    <property type="project" value="UniProtKB"/>
</dbReference>
<dbReference type="GO" id="GO:0007229">
    <property type="term" value="P:integrin-mediated signaling pathway"/>
    <property type="evidence" value="ECO:0007669"/>
    <property type="project" value="InterPro"/>
</dbReference>
<dbReference type="GO" id="GO:0051546">
    <property type="term" value="P:keratinocyte migration"/>
    <property type="evidence" value="ECO:0000250"/>
    <property type="project" value="UniProtKB"/>
</dbReference>
<dbReference type="GO" id="GO:0043616">
    <property type="term" value="P:keratinocyte proliferation"/>
    <property type="evidence" value="ECO:0000250"/>
    <property type="project" value="UniProtKB"/>
</dbReference>
<dbReference type="GO" id="GO:0090090">
    <property type="term" value="P:negative regulation of canonical Wnt signaling pathway"/>
    <property type="evidence" value="ECO:0000315"/>
    <property type="project" value="CAFA"/>
</dbReference>
<dbReference type="GO" id="GO:0010629">
    <property type="term" value="P:negative regulation of gene expression"/>
    <property type="evidence" value="ECO:0000315"/>
    <property type="project" value="CAFA"/>
</dbReference>
<dbReference type="GO" id="GO:0042308">
    <property type="term" value="P:negative regulation of protein import into nucleus"/>
    <property type="evidence" value="ECO:0000315"/>
    <property type="project" value="CAFA"/>
</dbReference>
<dbReference type="GO" id="GO:2000647">
    <property type="term" value="P:negative regulation of stem cell proliferation"/>
    <property type="evidence" value="ECO:0000315"/>
    <property type="project" value="CAFA"/>
</dbReference>
<dbReference type="GO" id="GO:0051886">
    <property type="term" value="P:negative regulation of timing of anagen"/>
    <property type="evidence" value="ECO:0000315"/>
    <property type="project" value="CAFA"/>
</dbReference>
<dbReference type="GO" id="GO:0033630">
    <property type="term" value="P:positive regulation of cell adhesion mediated by integrin"/>
    <property type="evidence" value="ECO:0000315"/>
    <property type="project" value="CAFA"/>
</dbReference>
<dbReference type="GO" id="GO:0001954">
    <property type="term" value="P:positive regulation of cell-matrix adhesion"/>
    <property type="evidence" value="ECO:0000315"/>
    <property type="project" value="CAFA"/>
</dbReference>
<dbReference type="GO" id="GO:0033625">
    <property type="term" value="P:positive regulation of integrin activation"/>
    <property type="evidence" value="ECO:0007669"/>
    <property type="project" value="Ensembl"/>
</dbReference>
<dbReference type="GO" id="GO:0071636">
    <property type="term" value="P:positive regulation of transforming growth factor beta production"/>
    <property type="evidence" value="ECO:0000315"/>
    <property type="project" value="CAFA"/>
</dbReference>
<dbReference type="GO" id="GO:0030511">
    <property type="term" value="P:positive regulation of transforming growth factor beta receptor signaling pathway"/>
    <property type="evidence" value="ECO:0000315"/>
    <property type="project" value="CAFA"/>
</dbReference>
<dbReference type="GO" id="GO:1903691">
    <property type="term" value="P:positive regulation of wound healing, spreading of epidermal cells"/>
    <property type="evidence" value="ECO:0007669"/>
    <property type="project" value="Ensembl"/>
</dbReference>
<dbReference type="CDD" id="cd14473">
    <property type="entry name" value="FERM_B-lobe"/>
    <property type="match status" value="1"/>
</dbReference>
<dbReference type="CDD" id="cd13205">
    <property type="entry name" value="FERM_C_fermitin"/>
    <property type="match status" value="1"/>
</dbReference>
<dbReference type="CDD" id="cd17180">
    <property type="entry name" value="FERM_F0_KIND1"/>
    <property type="match status" value="1"/>
</dbReference>
<dbReference type="CDD" id="cd01237">
    <property type="entry name" value="PH_fermitin"/>
    <property type="match status" value="1"/>
</dbReference>
<dbReference type="DisProt" id="DP00655"/>
<dbReference type="FunFam" id="2.30.29.30:FF:000037">
    <property type="entry name" value="Fermitin family homolog 2"/>
    <property type="match status" value="1"/>
</dbReference>
<dbReference type="FunFam" id="2.30.29.30:FF:000057">
    <property type="entry name" value="Fermitin family homolog 2 (Drosophila)"/>
    <property type="match status" value="1"/>
</dbReference>
<dbReference type="FunFam" id="3.10.20.90:FF:000035">
    <property type="entry name" value="Fermitin family homolog 2 (Drosophila)"/>
    <property type="match status" value="1"/>
</dbReference>
<dbReference type="Gene3D" id="3.10.20.90">
    <property type="entry name" value="Phosphatidylinositol 3-kinase Catalytic Subunit, Chain A, domain 1"/>
    <property type="match status" value="2"/>
</dbReference>
<dbReference type="Gene3D" id="2.30.29.30">
    <property type="entry name" value="Pleckstrin-homology domain (PH domain)/Phosphotyrosine-binding domain (PTB)"/>
    <property type="match status" value="2"/>
</dbReference>
<dbReference type="InterPro" id="IPR019749">
    <property type="entry name" value="Band_41_domain"/>
</dbReference>
<dbReference type="InterPro" id="IPR035963">
    <property type="entry name" value="FERM_2"/>
</dbReference>
<dbReference type="InterPro" id="IPR019748">
    <property type="entry name" value="FERM_central"/>
</dbReference>
<dbReference type="InterPro" id="IPR037843">
    <property type="entry name" value="Kindlin/fermitin"/>
</dbReference>
<dbReference type="InterPro" id="IPR040790">
    <property type="entry name" value="Kindlin_2_N"/>
</dbReference>
<dbReference type="InterPro" id="IPR011993">
    <property type="entry name" value="PH-like_dom_sf"/>
</dbReference>
<dbReference type="InterPro" id="IPR001849">
    <property type="entry name" value="PH_domain"/>
</dbReference>
<dbReference type="InterPro" id="IPR037837">
    <property type="entry name" value="PH_Kindlin/fermitin"/>
</dbReference>
<dbReference type="PANTHER" id="PTHR16160">
    <property type="entry name" value="FERMITIN 2-RELATED"/>
    <property type="match status" value="1"/>
</dbReference>
<dbReference type="PANTHER" id="PTHR16160:SF12">
    <property type="entry name" value="FERMITIN FAMILY HOMOLOG 1"/>
    <property type="match status" value="1"/>
</dbReference>
<dbReference type="Pfam" id="PF00373">
    <property type="entry name" value="FERM_M"/>
    <property type="match status" value="1"/>
</dbReference>
<dbReference type="Pfam" id="PF18124">
    <property type="entry name" value="Kindlin_2_N"/>
    <property type="match status" value="1"/>
</dbReference>
<dbReference type="Pfam" id="PF00169">
    <property type="entry name" value="PH"/>
    <property type="match status" value="1"/>
</dbReference>
<dbReference type="SMART" id="SM00295">
    <property type="entry name" value="B41"/>
    <property type="match status" value="1"/>
</dbReference>
<dbReference type="SMART" id="SM00233">
    <property type="entry name" value="PH"/>
    <property type="match status" value="1"/>
</dbReference>
<dbReference type="SUPFAM" id="SSF50729">
    <property type="entry name" value="PH domain-like"/>
    <property type="match status" value="2"/>
</dbReference>
<dbReference type="SUPFAM" id="SSF47031">
    <property type="entry name" value="Second domain of FERM"/>
    <property type="match status" value="1"/>
</dbReference>
<dbReference type="PROSITE" id="PS00661">
    <property type="entry name" value="FERM_2"/>
    <property type="match status" value="1"/>
</dbReference>
<dbReference type="PROSITE" id="PS50003">
    <property type="entry name" value="PH_DOMAIN"/>
    <property type="match status" value="1"/>
</dbReference>
<name>FERM1_MOUSE</name>
<comment type="function">
    <text evidence="1">Involved in cell adhesion. Contributes to integrin activation. When coexpressed with talin, potentiates activation of ITGA2B. Required for normal keratinocyte proliferation. Required for normal polarization of basal keratinocytes in skin, and for normal cell shape. Required for normal adhesion of keratinocytes to fibronectin and laminin, and for normal keratinocyte migration to wound sites (By similarity).</text>
</comment>
<comment type="subunit">
    <text evidence="1">Interacts with the cytoplasmic domain of integrins ITGB1 and ITGB3.</text>
</comment>
<comment type="subcellular location">
    <subcellularLocation>
        <location evidence="1">Cytoplasm</location>
        <location evidence="1">Cytoskeleton</location>
    </subcellularLocation>
    <subcellularLocation>
        <location evidence="1">Cell junction</location>
        <location evidence="1">Focal adhesion</location>
    </subcellularLocation>
    <subcellularLocation>
        <location evidence="1">Cell projection</location>
        <location evidence="1">Ruffle membrane</location>
        <topology evidence="1">Peripheral membrane protein</topology>
        <orientation evidence="1">Cytoplasmic side</orientation>
    </subcellularLocation>
    <text evidence="1">Colocalizes with filamentous actin. Constituent of focal adhesions (By similarity). Localized at the basal aspect of skin keratinocytes, close to the cell membrane (By similarity). Upon TGFB1 treatment, it localizes to membrane ruffles (By similarity).</text>
</comment>
<comment type="domain">
    <text evidence="1">The FERM domain is not correctly detected by PROSITE or Pfam techniques because it contains the insertion of a PH domain. The FERM domain contains the subdomains F1, F2 and F3. It is preceded by a F0 domain with a ubiquitin-like fold. The F0 domain is required for integrin activation and for localization at focal adhesions (By similarity).</text>
</comment>
<comment type="disruption phenotype">
    <text evidence="5">Mice are born with the expected Mendelian distribution and appear normal at birth, but fail to thrive, become dehydrated and die after three to five days. They develop skin atrophy and die due to a lethal intestinal epithelial dysfunction. The colon is shortened and swollen and presents signs of acute inflammation. At the time of death, about 80% of the colonic epithelium is detached.</text>
</comment>
<comment type="similarity">
    <text evidence="6">Belongs to the kindlin family.</text>
</comment>
<comment type="sequence caution" evidence="6">
    <conflict type="erroneous initiation">
        <sequence resource="EMBL-CDS" id="AAH29093"/>
    </conflict>
    <text>Truncated N-terminus.</text>
</comment>
<accession>P59113</accession>
<accession>A2ANX1</accession>
<accession>Q8BQG6</accession>
<gene>
    <name type="primary">Fermt1</name>
    <name type="synonym">Kind1</name>
    <name type="synonym">Urp1</name>
</gene>
<feature type="chain" id="PRO_0000219453" description="Fermitin family homolog 1">
    <location>
        <begin position="1"/>
        <end position="677"/>
    </location>
</feature>
<feature type="domain" description="FERM">
    <location>
        <begin position="96"/>
        <end position="653"/>
    </location>
</feature>
<feature type="domain" description="PH" evidence="3">
    <location>
        <begin position="377"/>
        <end position="473"/>
    </location>
</feature>
<feature type="region of interest" description="Disordered" evidence="4">
    <location>
        <begin position="157"/>
        <end position="181"/>
    </location>
</feature>
<feature type="compositionally biased region" description="Low complexity" evidence="4">
    <location>
        <begin position="169"/>
        <end position="181"/>
    </location>
</feature>
<feature type="modified residue" description="Phosphoserine" evidence="2">
    <location>
        <position position="170"/>
    </location>
</feature>
<feature type="modified residue" description="Phosphoserine" evidence="2">
    <location>
        <position position="179"/>
    </location>
</feature>
<feature type="sequence conflict" description="In Ref. 2; AAH29093." evidence="6" ref="2">
    <original>C</original>
    <variation>R</variation>
    <location>
        <position position="522"/>
    </location>
</feature>
<feature type="sequence conflict" description="In Ref. 2; AAH29093." evidence="6" ref="2">
    <original>A</original>
    <variation>S</variation>
    <location>
        <position position="586"/>
    </location>
</feature>
<feature type="strand" evidence="7">
    <location>
        <begin position="1"/>
        <end position="5"/>
    </location>
</feature>
<feature type="strand" evidence="7">
    <location>
        <begin position="12"/>
        <end position="19"/>
    </location>
</feature>
<feature type="strand" evidence="7">
    <location>
        <begin position="26"/>
        <end position="33"/>
    </location>
</feature>
<feature type="helix" evidence="7">
    <location>
        <begin position="39"/>
        <end position="50"/>
    </location>
</feature>
<feature type="strand" evidence="7">
    <location>
        <begin position="57"/>
        <end position="63"/>
    </location>
</feature>
<feature type="turn" evidence="7">
    <location>
        <begin position="64"/>
        <end position="67"/>
    </location>
</feature>
<feature type="strand" evidence="7">
    <location>
        <begin position="68"/>
        <end position="70"/>
    </location>
</feature>
<feature type="helix" evidence="7">
    <location>
        <begin position="77"/>
        <end position="80"/>
    </location>
</feature>
<feature type="strand" evidence="7">
    <location>
        <begin position="88"/>
        <end position="92"/>
    </location>
</feature>
<feature type="strand" evidence="8">
    <location>
        <begin position="372"/>
        <end position="379"/>
    </location>
</feature>
<feature type="strand" evidence="8">
    <location>
        <begin position="390"/>
        <end position="397"/>
    </location>
</feature>
<feature type="strand" evidence="8">
    <location>
        <begin position="400"/>
        <end position="406"/>
    </location>
</feature>
<feature type="helix" evidence="8">
    <location>
        <begin position="407"/>
        <end position="409"/>
    </location>
</feature>
<feature type="strand" evidence="8">
    <location>
        <begin position="415"/>
        <end position="419"/>
    </location>
</feature>
<feature type="strand" evidence="8">
    <location>
        <begin position="424"/>
        <end position="430"/>
    </location>
</feature>
<feature type="turn" evidence="8">
    <location>
        <begin position="431"/>
        <end position="434"/>
    </location>
</feature>
<feature type="strand" evidence="8">
    <location>
        <begin position="435"/>
        <end position="444"/>
    </location>
</feature>
<feature type="strand" evidence="8">
    <location>
        <begin position="447"/>
        <end position="457"/>
    </location>
</feature>
<feature type="helix" evidence="8">
    <location>
        <begin position="458"/>
        <end position="472"/>
    </location>
</feature>
<feature type="helix" evidence="8">
    <location>
        <begin position="482"/>
        <end position="496"/>
    </location>
</feature>
<proteinExistence type="evidence at protein level"/>
<organism>
    <name type="scientific">Mus musculus</name>
    <name type="common">Mouse</name>
    <dbReference type="NCBI Taxonomy" id="10090"/>
    <lineage>
        <taxon>Eukaryota</taxon>
        <taxon>Metazoa</taxon>
        <taxon>Chordata</taxon>
        <taxon>Craniata</taxon>
        <taxon>Vertebrata</taxon>
        <taxon>Euteleostomi</taxon>
        <taxon>Mammalia</taxon>
        <taxon>Eutheria</taxon>
        <taxon>Euarchontoglires</taxon>
        <taxon>Glires</taxon>
        <taxon>Rodentia</taxon>
        <taxon>Myomorpha</taxon>
        <taxon>Muroidea</taxon>
        <taxon>Muridae</taxon>
        <taxon>Murinae</taxon>
        <taxon>Mus</taxon>
        <taxon>Mus</taxon>
    </lineage>
</organism>